<evidence type="ECO:0000255" key="1">
    <source>
        <dbReference type="HAMAP-Rule" id="MF_00294"/>
    </source>
</evidence>
<evidence type="ECO:0000305" key="2"/>
<dbReference type="EMBL" id="AM286280">
    <property type="protein sequence ID" value="CAL09620.1"/>
    <property type="molecule type" value="Genomic_DNA"/>
</dbReference>
<dbReference type="RefSeq" id="WP_003014820.1">
    <property type="nucleotide sequence ID" value="NC_008245.1"/>
</dbReference>
<dbReference type="SMR" id="Q14G25"/>
<dbReference type="GeneID" id="75264166"/>
<dbReference type="KEGG" id="ftf:FTF1604"/>
<dbReference type="HOGENOM" id="CLU_190949_1_1_6"/>
<dbReference type="GO" id="GO:0022625">
    <property type="term" value="C:cytosolic large ribosomal subunit"/>
    <property type="evidence" value="ECO:0007669"/>
    <property type="project" value="TreeGrafter"/>
</dbReference>
<dbReference type="GO" id="GO:0003735">
    <property type="term" value="F:structural constituent of ribosome"/>
    <property type="evidence" value="ECO:0007669"/>
    <property type="project" value="InterPro"/>
</dbReference>
<dbReference type="GO" id="GO:0006412">
    <property type="term" value="P:translation"/>
    <property type="evidence" value="ECO:0007669"/>
    <property type="project" value="UniProtKB-UniRule"/>
</dbReference>
<dbReference type="FunFam" id="2.20.28.120:FF:000001">
    <property type="entry name" value="50S ribosomal protein L33"/>
    <property type="match status" value="1"/>
</dbReference>
<dbReference type="Gene3D" id="2.20.28.120">
    <property type="entry name" value="Ribosomal protein L33"/>
    <property type="match status" value="1"/>
</dbReference>
<dbReference type="HAMAP" id="MF_00294">
    <property type="entry name" value="Ribosomal_bL33"/>
    <property type="match status" value="1"/>
</dbReference>
<dbReference type="InterPro" id="IPR001705">
    <property type="entry name" value="Ribosomal_bL33"/>
</dbReference>
<dbReference type="InterPro" id="IPR018264">
    <property type="entry name" value="Ribosomal_bL33_CS"/>
</dbReference>
<dbReference type="InterPro" id="IPR038584">
    <property type="entry name" value="Ribosomal_bL33_sf"/>
</dbReference>
<dbReference type="InterPro" id="IPR011332">
    <property type="entry name" value="Ribosomal_zn-bd"/>
</dbReference>
<dbReference type="NCBIfam" id="NF001860">
    <property type="entry name" value="PRK00595.1"/>
    <property type="match status" value="1"/>
</dbReference>
<dbReference type="NCBIfam" id="TIGR01023">
    <property type="entry name" value="rpmG_bact"/>
    <property type="match status" value="1"/>
</dbReference>
<dbReference type="PANTHER" id="PTHR15238">
    <property type="entry name" value="54S RIBOSOMAL PROTEIN L39, MITOCHONDRIAL"/>
    <property type="match status" value="1"/>
</dbReference>
<dbReference type="PANTHER" id="PTHR15238:SF1">
    <property type="entry name" value="LARGE RIBOSOMAL SUBUNIT PROTEIN BL33M"/>
    <property type="match status" value="1"/>
</dbReference>
<dbReference type="Pfam" id="PF00471">
    <property type="entry name" value="Ribosomal_L33"/>
    <property type="match status" value="1"/>
</dbReference>
<dbReference type="SUPFAM" id="SSF57829">
    <property type="entry name" value="Zn-binding ribosomal proteins"/>
    <property type="match status" value="1"/>
</dbReference>
<dbReference type="PROSITE" id="PS00582">
    <property type="entry name" value="RIBOSOMAL_L33"/>
    <property type="match status" value="1"/>
</dbReference>
<protein>
    <recommendedName>
        <fullName evidence="1">Large ribosomal subunit protein bL33</fullName>
    </recommendedName>
    <alternativeName>
        <fullName evidence="2">50S ribosomal protein L33</fullName>
    </alternativeName>
</protein>
<sequence length="51" mass="6141">MREKIRLVSSAKTGHFYTTTKNKKEMPNKMEIKKYDPVVRKHVMYKEAKIK</sequence>
<name>RL33_FRAT1</name>
<proteinExistence type="inferred from homology"/>
<accession>Q14G25</accession>
<organism>
    <name type="scientific">Francisella tularensis subsp. tularensis (strain FSC 198)</name>
    <dbReference type="NCBI Taxonomy" id="393115"/>
    <lineage>
        <taxon>Bacteria</taxon>
        <taxon>Pseudomonadati</taxon>
        <taxon>Pseudomonadota</taxon>
        <taxon>Gammaproteobacteria</taxon>
        <taxon>Thiotrichales</taxon>
        <taxon>Francisellaceae</taxon>
        <taxon>Francisella</taxon>
    </lineage>
</organism>
<gene>
    <name evidence="1" type="primary">rpmG</name>
    <name type="ordered locus">FTF1604</name>
</gene>
<comment type="similarity">
    <text evidence="1">Belongs to the bacterial ribosomal protein bL33 family.</text>
</comment>
<keyword id="KW-0687">Ribonucleoprotein</keyword>
<keyword id="KW-0689">Ribosomal protein</keyword>
<reference key="1">
    <citation type="journal article" date="2007" name="PLoS ONE">
        <title>Genome sequencing shows that European isolates of Francisella tularensis subspecies tularensis are almost identical to US laboratory strain Schu S4.</title>
        <authorList>
            <person name="Chaudhuri R.R."/>
            <person name="Ren C.-P."/>
            <person name="Desmond L."/>
            <person name="Vincent G.A."/>
            <person name="Silman N.J."/>
            <person name="Brehm J.K."/>
            <person name="Elmore M.J."/>
            <person name="Hudson M.J."/>
            <person name="Forsman M."/>
            <person name="Isherwood K.E."/>
            <person name="Gurycova D."/>
            <person name="Minton N.P."/>
            <person name="Titball R.W."/>
            <person name="Pallen M.J."/>
            <person name="Vipond R."/>
        </authorList>
    </citation>
    <scope>NUCLEOTIDE SEQUENCE [LARGE SCALE GENOMIC DNA]</scope>
    <source>
        <strain>FSC 198</strain>
    </source>
</reference>
<feature type="chain" id="PRO_0000356468" description="Large ribosomal subunit protein bL33">
    <location>
        <begin position="1"/>
        <end position="51"/>
    </location>
</feature>